<name>IL2RG_HUMAN</name>
<feature type="signal peptide">
    <location>
        <begin position="1"/>
        <end position="22"/>
    </location>
</feature>
<feature type="chain" id="PRO_0000010866" description="Cytokine receptor common subunit gamma">
    <location>
        <begin position="23"/>
        <end position="369"/>
    </location>
</feature>
<feature type="topological domain" description="Extracellular" evidence="2">
    <location>
        <begin position="23"/>
        <end position="262"/>
    </location>
</feature>
<feature type="transmembrane region" description="Helical" evidence="2">
    <location>
        <begin position="263"/>
        <end position="283"/>
    </location>
</feature>
<feature type="topological domain" description="Cytoplasmic" evidence="2">
    <location>
        <begin position="284"/>
        <end position="369"/>
    </location>
</feature>
<feature type="domain" description="Fibronectin type-III" evidence="3">
    <location>
        <begin position="156"/>
        <end position="253"/>
    </location>
</feature>
<feature type="short sequence motif" description="WSXWS motif">
    <location>
        <begin position="237"/>
        <end position="241"/>
    </location>
</feature>
<feature type="short sequence motif" description="Box 1 motif">
    <location>
        <begin position="286"/>
        <end position="294"/>
    </location>
</feature>
<feature type="modified residue" description="Phosphothreonine" evidence="25">
    <location>
        <position position="292"/>
    </location>
</feature>
<feature type="glycosylation site" description="N-linked (GlcNAc...) asparagine" evidence="2">
    <location>
        <position position="24"/>
    </location>
</feature>
<feature type="glycosylation site" description="N-linked (GlcNAc...) asparagine" evidence="6 7">
    <location>
        <position position="71"/>
    </location>
</feature>
<feature type="glycosylation site" description="N-linked (GlcNAc...) asparagine" evidence="2">
    <location>
        <position position="75"/>
    </location>
</feature>
<feature type="glycosylation site" description="N-linked (GlcNAc...) asparagine" evidence="6 7">
    <location>
        <position position="84"/>
    </location>
</feature>
<feature type="glycosylation site" description="N-linked (GlcNAc...) asparagine" evidence="6 7">
    <location>
        <position position="159"/>
    </location>
</feature>
<feature type="glycosylation site" description="N-linked (GlcNAc...) asparagine" evidence="2">
    <location>
        <position position="249"/>
    </location>
</feature>
<feature type="disulfide bond">
    <location>
        <begin position="62"/>
        <end position="72"/>
    </location>
</feature>
<feature type="disulfide bond">
    <location>
        <begin position="102"/>
        <end position="115"/>
    </location>
</feature>
<feature type="disulfide bond">
    <location>
        <begin position="182"/>
        <end position="231"/>
    </location>
</feature>
<feature type="splice variant" id="VSP_047581" description="In isoform 2." evidence="23">
    <original>MLKPSLPF</original>
    <variation>MGMKTPQL</variation>
    <location>
        <begin position="1"/>
        <end position="8"/>
    </location>
</feature>
<feature type="splice variant" id="VSP_047582" description="In isoform 2." evidence="23">
    <location>
        <begin position="9"/>
        <end position="198"/>
    </location>
</feature>
<feature type="sequence variant" id="VAR_002668" description="In XSCID." evidence="12">
    <original>D</original>
    <variation>N</variation>
    <location>
        <position position="39"/>
    </location>
</feature>
<feature type="sequence variant" id="VAR_059301" description="In dbSNP:rs7885041.">
    <original>T</original>
    <variation>S</variation>
    <location>
        <position position="44"/>
    </location>
</feature>
<feature type="sequence variant" id="VAR_002669" description="In XSCID.">
    <original>C</original>
    <variation>G</variation>
    <location>
        <position position="62"/>
    </location>
</feature>
<feature type="sequence variant" id="VAR_002670" description="In XSCID.">
    <original>E</original>
    <variation>G</variation>
    <location>
        <position position="68"/>
    </location>
</feature>
<feature type="sequence variant" id="VAR_002671" description="In XSCID; dbSNP:rs1057520644." evidence="14">
    <original>E</original>
    <variation>K</variation>
    <location>
        <position position="68"/>
    </location>
</feature>
<feature type="sequence variant" id="VAR_002672" description="In XSCID; dbSNP:rs1356632210.">
    <original>N</original>
    <variation>K</variation>
    <location>
        <position position="84"/>
    </location>
</feature>
<feature type="sequence variant" id="VAR_002673" description="In XSCID.">
    <original>Y</original>
    <variation>C</variation>
    <location>
        <position position="89"/>
    </location>
</feature>
<feature type="sequence variant" id="VAR_002674" description="In XSCID; dbSNP:rs193922347.">
    <original>Y</original>
    <variation>C</variation>
    <location>
        <position position="105"/>
    </location>
</feature>
<feature type="sequence variant" id="VAR_020611" description="In dbSNP:rs17875899." evidence="22">
    <original>E</original>
    <variation>K</variation>
    <location>
        <position position="109"/>
    </location>
</feature>
<feature type="sequence variant" id="VAR_002675" description="In XSCID; dbSNP:rs111033620." evidence="16">
    <original>G</original>
    <variation>D</variation>
    <location>
        <position position="114"/>
    </location>
</feature>
<feature type="sequence variant" id="VAR_002676" description="In XSCID; dbSNP:rs1556330755." evidence="15">
    <original>C</original>
    <variation>F</variation>
    <location>
        <position position="115"/>
    </location>
</feature>
<feature type="sequence variant" id="VAR_002677" description="In XSCID; atypical; dbSNP:rs111033622." evidence="18">
    <original>C</original>
    <variation>R</variation>
    <location>
        <position position="115"/>
    </location>
</feature>
<feature type="sequence variant" id="VAR_002678" description="In XSCID.">
    <original>H</original>
    <variation>P</variation>
    <location>
        <position position="123"/>
    </location>
</feature>
<feature type="sequence variant" id="VAR_002679" description="In XSCID.">
    <original>Y</original>
    <variation>N</variation>
    <location>
        <position position="125"/>
    </location>
</feature>
<feature type="sequence variant" id="VAR_002680" description="In XSCID.">
    <original>Q</original>
    <variation>P</variation>
    <location>
        <position position="144"/>
    </location>
</feature>
<feature type="sequence variant" id="VAR_002681" description="In XSCID; dbSNP:rs111033621." evidence="16">
    <original>I</original>
    <variation>N</variation>
    <location>
        <position position="153"/>
    </location>
</feature>
<feature type="sequence variant" id="VAR_002682" description="In XSCID; dbSNP:rs1057521062.">
    <original>A</original>
    <variation>V</variation>
    <location>
        <position position="156"/>
    </location>
</feature>
<feature type="sequence variant" id="VAR_002683" description="In XSCID." evidence="13">
    <original>L</original>
    <variation>H</variation>
    <location>
        <position position="162"/>
    </location>
</feature>
<feature type="sequence variant" id="VAR_002684" description="In XSCID.">
    <original>L</original>
    <variation>P</variation>
    <location>
        <position position="172"/>
    </location>
</feature>
<feature type="sequence variant" id="VAR_002685" description="In XSCID.">
    <original>L</original>
    <variation>Q</variation>
    <location>
        <position position="172"/>
    </location>
</feature>
<feature type="sequence variant" id="VAR_002686" description="In XSCID.">
    <original>C</original>
    <variation>R</variation>
    <location>
        <position position="182"/>
    </location>
</feature>
<feature type="sequence variant" id="VAR_002687" description="In XSCID." evidence="8">
    <original>L</original>
    <variation>S</variation>
    <location>
        <position position="183"/>
    </location>
</feature>
<feature type="sequence variant" id="VAR_002688" description="In XCID; dbSNP:rs111033618." evidence="21">
    <original>R</original>
    <variation>C</variation>
    <location>
        <position position="222"/>
    </location>
</feature>
<feature type="sequence variant" id="VAR_002689" description="In XSCID; dbSNP:rs869320658." evidence="19">
    <original>R</original>
    <variation>W</variation>
    <location>
        <position position="224"/>
    </location>
</feature>
<feature type="sequence variant" id="VAR_002690" description="In XSCID; dbSNP:rs869320659." evidence="9">
    <original>R</original>
    <variation>C</variation>
    <location>
        <position position="226"/>
    </location>
</feature>
<feature type="sequence variant" id="VAR_002691" description="In XSCID; dbSNP:rs869320660." evidence="9">
    <original>R</original>
    <variation>H</variation>
    <location>
        <position position="226"/>
    </location>
</feature>
<feature type="sequence variant" id="VAR_002692" description="In XSCID.">
    <original>F</original>
    <variation>C</variation>
    <location>
        <position position="227"/>
    </location>
</feature>
<feature type="sequence variant" id="VAR_002693" description="In XSCID.">
    <original>L</original>
    <variation>P</variation>
    <location>
        <position position="230"/>
    </location>
</feature>
<feature type="sequence variant" id="VAR_002694" description="In XSCID.">
    <original>C</original>
    <variation>Y</variation>
    <location>
        <position position="231"/>
    </location>
</feature>
<feature type="sequence variant" id="VAR_002695" description="In XSCID; uncertain significance; dbSNP:rs1569479909.">
    <original>G</original>
    <variation>R</variation>
    <location>
        <position position="232"/>
    </location>
</feature>
<feature type="sequence variant" id="VAR_002696" description="In XSCID." evidence="10">
    <original>W</original>
    <variation>WQHW</variation>
    <location>
        <position position="237"/>
    </location>
</feature>
<feature type="sequence variant" id="VAR_002697" description="In XSCID." evidence="15">
    <original>W</original>
    <variation>C</variation>
    <location>
        <position position="240"/>
    </location>
</feature>
<feature type="sequence variant" id="VAR_002698" description="In XSCID." evidence="15">
    <original>S</original>
    <variation>I</variation>
    <location>
        <position position="241"/>
    </location>
</feature>
<feature type="sequence variant" id="VAR_002699" description="In XSCID.">
    <original>M</original>
    <variation>R</variation>
    <location>
        <position position="270"/>
    </location>
</feature>
<feature type="sequence variant" id="VAR_002701" description="In XSCID; dbSNP:rs111033617." evidence="20">
    <original>R</original>
    <variation>Q</variation>
    <location>
        <position position="285"/>
    </location>
</feature>
<feature type="sequence variant" id="VAR_002702" description="In XCID; dbSNP:rs137852510." evidence="11">
    <original>L</original>
    <variation>Q</variation>
    <location>
        <position position="293"/>
    </location>
</feature>
<feature type="strand" evidence="26">
    <location>
        <begin position="61"/>
        <end position="65"/>
    </location>
</feature>
<feature type="turn" evidence="26">
    <location>
        <begin position="66"/>
        <end position="68"/>
    </location>
</feature>
<feature type="strand" evidence="26">
    <location>
        <begin position="69"/>
        <end position="73"/>
    </location>
</feature>
<feature type="strand" evidence="26">
    <location>
        <begin position="78"/>
        <end position="81"/>
    </location>
</feature>
<feature type="strand" evidence="26">
    <location>
        <begin position="86"/>
        <end position="91"/>
    </location>
</feature>
<feature type="strand" evidence="26">
    <location>
        <begin position="94"/>
        <end position="96"/>
    </location>
</feature>
<feature type="strand" evidence="29">
    <location>
        <begin position="99"/>
        <end position="101"/>
    </location>
</feature>
<feature type="strand" evidence="26">
    <location>
        <begin position="103"/>
        <end position="108"/>
    </location>
</feature>
<feature type="strand" evidence="26">
    <location>
        <begin position="111"/>
        <end position="118"/>
    </location>
</feature>
<feature type="helix" evidence="26">
    <location>
        <begin position="119"/>
        <end position="121"/>
    </location>
</feature>
<feature type="strand" evidence="27">
    <location>
        <begin position="124"/>
        <end position="126"/>
    </location>
</feature>
<feature type="strand" evidence="26">
    <location>
        <begin position="128"/>
        <end position="133"/>
    </location>
</feature>
<feature type="strand" evidence="29">
    <location>
        <begin position="135"/>
        <end position="137"/>
    </location>
</feature>
<feature type="strand" evidence="26">
    <location>
        <begin position="141"/>
        <end position="146"/>
    </location>
</feature>
<feature type="helix" evidence="26">
    <location>
        <begin position="148"/>
        <end position="150"/>
    </location>
</feature>
<feature type="strand" evidence="26">
    <location>
        <begin position="151"/>
        <end position="153"/>
    </location>
</feature>
<feature type="strand" evidence="26">
    <location>
        <begin position="158"/>
        <end position="166"/>
    </location>
</feature>
<feature type="strand" evidence="26">
    <location>
        <begin position="169"/>
        <end position="175"/>
    </location>
</feature>
<feature type="helix" evidence="30">
    <location>
        <begin position="180"/>
        <end position="182"/>
    </location>
</feature>
<feature type="strand" evidence="26">
    <location>
        <begin position="184"/>
        <end position="191"/>
    </location>
</feature>
<feature type="strand" evidence="26">
    <location>
        <begin position="198"/>
        <end position="202"/>
    </location>
</feature>
<feature type="strand" evidence="26">
    <location>
        <begin position="207"/>
        <end position="210"/>
    </location>
</feature>
<feature type="strand" evidence="28">
    <location>
        <begin position="215"/>
        <end position="217"/>
    </location>
</feature>
<feature type="strand" evidence="26">
    <location>
        <begin position="219"/>
        <end position="226"/>
    </location>
</feature>
<feature type="strand" evidence="26">
    <location>
        <begin position="229"/>
        <end position="231"/>
    </location>
</feature>
<feature type="strand" evidence="26">
    <location>
        <begin position="244"/>
        <end position="246"/>
    </location>
</feature>
<evidence type="ECO:0000250" key="1">
    <source>
        <dbReference type="UniProtKB" id="P34902"/>
    </source>
</evidence>
<evidence type="ECO:0000255" key="2"/>
<evidence type="ECO:0000255" key="3">
    <source>
        <dbReference type="PROSITE-ProRule" id="PRU00316"/>
    </source>
</evidence>
<evidence type="ECO:0000269" key="4">
    <source>
    </source>
</evidence>
<evidence type="ECO:0000269" key="5">
    <source>
    </source>
</evidence>
<evidence type="ECO:0000269" key="6">
    <source>
    </source>
</evidence>
<evidence type="ECO:0000269" key="7">
    <source>
    </source>
</evidence>
<evidence type="ECO:0000269" key="8">
    <source>
    </source>
</evidence>
<evidence type="ECO:0000269" key="9">
    <source>
    </source>
</evidence>
<evidence type="ECO:0000269" key="10">
    <source>
    </source>
</evidence>
<evidence type="ECO:0000269" key="11">
    <source>
    </source>
</evidence>
<evidence type="ECO:0000269" key="12">
    <source>
    </source>
</evidence>
<evidence type="ECO:0000269" key="13">
    <source>
    </source>
</evidence>
<evidence type="ECO:0000269" key="14">
    <source>
    </source>
</evidence>
<evidence type="ECO:0000269" key="15">
    <source>
    </source>
</evidence>
<evidence type="ECO:0000269" key="16">
    <source>
    </source>
</evidence>
<evidence type="ECO:0000269" key="17">
    <source>
    </source>
</evidence>
<evidence type="ECO:0000269" key="18">
    <source>
    </source>
</evidence>
<evidence type="ECO:0000269" key="19">
    <source>
    </source>
</evidence>
<evidence type="ECO:0000269" key="20">
    <source>
    </source>
</evidence>
<evidence type="ECO:0000269" key="21">
    <source>
    </source>
</evidence>
<evidence type="ECO:0000269" key="22">
    <source ref="5"/>
</evidence>
<evidence type="ECO:0000303" key="23">
    <source ref="4"/>
</evidence>
<evidence type="ECO:0000305" key="24"/>
<evidence type="ECO:0007744" key="25">
    <source>
    </source>
</evidence>
<evidence type="ECO:0007829" key="26">
    <source>
        <dbReference type="PDB" id="2B5I"/>
    </source>
</evidence>
<evidence type="ECO:0007829" key="27">
    <source>
        <dbReference type="PDB" id="3BPL"/>
    </source>
</evidence>
<evidence type="ECO:0007829" key="28">
    <source>
        <dbReference type="PDB" id="3QB7"/>
    </source>
</evidence>
<evidence type="ECO:0007829" key="29">
    <source>
        <dbReference type="PDB" id="4GS7"/>
    </source>
</evidence>
<evidence type="ECO:0007829" key="30">
    <source>
        <dbReference type="PDB" id="5M5E"/>
    </source>
</evidence>
<keyword id="KW-0002">3D-structure</keyword>
<keyword id="KW-0025">Alternative splicing</keyword>
<keyword id="KW-1003">Cell membrane</keyword>
<keyword id="KW-0903">Direct protein sequencing</keyword>
<keyword id="KW-0225">Disease variant</keyword>
<keyword id="KW-1015">Disulfide bond</keyword>
<keyword id="KW-0325">Glycoprotein</keyword>
<keyword id="KW-0945">Host-virus interaction</keyword>
<keyword id="KW-0472">Membrane</keyword>
<keyword id="KW-0597">Phosphoprotein</keyword>
<keyword id="KW-1267">Proteomics identification</keyword>
<keyword id="KW-0675">Receptor</keyword>
<keyword id="KW-1185">Reference proteome</keyword>
<keyword id="KW-0705">SCID</keyword>
<keyword id="KW-0732">Signal</keyword>
<keyword id="KW-0812">Transmembrane</keyword>
<keyword id="KW-1133">Transmembrane helix</keyword>
<sequence length="369" mass="42287">MLKPSLPFTSLLFLQLPLLGVGLNTTILTPNGNEDTTADFFLTTMPTDSLSVSTLPLPEVQCFVFNVEYMNCTWNSSSEPQPTNLTLHYWYKNSDNDKVQKCSHYLFSEEITSGCQLQKKEIHLYQTFVVQLQDPREPRRQATQMLKLQNLVIPWAPENLTLHKLSESQLELNWNNRFLNHCLEHLVQYRTDWDHSWTEQSVDYRHKFSLPSVDGQKRYTFRVRSRFNPLCGSAQHWSEWSHPIHWGSNTSKENPFLFALEAVVISVGSMGLIISLLCVYFWLERTMPRIPTLKNLEDLVTEYHGNFSAWSGVSKGLAESLQPDYSERLCLVSEIPPKGGALGEGPGASPCNQHSPYWAPPCYTLKPET</sequence>
<accession>P31785</accession>
<accession>Q5FC12</accession>
<organism>
    <name type="scientific">Homo sapiens</name>
    <name type="common">Human</name>
    <dbReference type="NCBI Taxonomy" id="9606"/>
    <lineage>
        <taxon>Eukaryota</taxon>
        <taxon>Metazoa</taxon>
        <taxon>Chordata</taxon>
        <taxon>Craniata</taxon>
        <taxon>Vertebrata</taxon>
        <taxon>Euteleostomi</taxon>
        <taxon>Mammalia</taxon>
        <taxon>Eutheria</taxon>
        <taxon>Euarchontoglires</taxon>
        <taxon>Primates</taxon>
        <taxon>Haplorrhini</taxon>
        <taxon>Catarrhini</taxon>
        <taxon>Hominidae</taxon>
        <taxon>Homo</taxon>
    </lineage>
</organism>
<comment type="function">
    <text evidence="5">Common subunit for the receptors for a variety of interleukins. Probably in association with IL15RA, involved in the stimulation of neutrophil phagocytosis by IL15 (PubMed:15123770).</text>
</comment>
<comment type="subunit">
    <text evidence="1 4 6 7">The gamma subunit is common to the IL2, IL4, IL7, IL15, IL21 and probably also the IL13 receptors. Interacts with SHB upon interleukin stimulation. Interacts with IL9 (By similarity).</text>
</comment>
<comment type="subunit">
    <text evidence="17">(Microbial infection) Interacts with HTLV-1 accessory protein p12I.</text>
</comment>
<comment type="interaction">
    <interactant intactId="EBI-80475">
        <id>P31785</id>
    </interactant>
    <interactant intactId="EBI-80516">
        <id>P13232</id>
        <label>IL7</label>
    </interactant>
    <organismsDiffer>false</organismsDiffer>
    <experiments>2</experiments>
</comment>
<comment type="interaction">
    <interactant intactId="EBI-80475">
        <id>P31785</id>
    </interactant>
    <interactant intactId="EBI-10171774">
        <id>P60410</id>
        <label>KRTAP10-8</label>
    </interactant>
    <organismsDiffer>false</organismsDiffer>
    <experiments>3</experiments>
</comment>
<comment type="interaction">
    <interactant intactId="EBI-80475">
        <id>P31785</id>
    </interactant>
    <interactant intactId="EBI-11987425">
        <id>Q6L8G8</id>
        <label>KRTAP5-7</label>
    </interactant>
    <organismsDiffer>false</organismsDiffer>
    <experiments>3</experiments>
</comment>
<comment type="interaction">
    <interactant intactId="EBI-80475">
        <id>P31785</id>
    </interactant>
    <interactant intactId="EBI-945833">
        <id>Q7Z3S9</id>
        <label>NOTCH2NLA</label>
    </interactant>
    <organismsDiffer>false</organismsDiffer>
    <experiments>4</experiments>
</comment>
<comment type="interaction">
    <interactant intactId="EBI-80475">
        <id>P31785</id>
    </interactant>
    <interactant intactId="EBI-750345">
        <id>Q96HR9</id>
        <label>REEP6</label>
    </interactant>
    <organismsDiffer>false</organismsDiffer>
    <experiments>3</experiments>
</comment>
<comment type="subcellular location">
    <subcellularLocation>
        <location evidence="5">Cell membrane</location>
        <topology evidence="2">Single-pass type I membrane protein</topology>
    </subcellularLocation>
    <subcellularLocation>
        <location evidence="5">Cell surface</location>
    </subcellularLocation>
</comment>
<comment type="alternative products">
    <event type="alternative splicing"/>
    <isoform>
        <id>P31785-1</id>
        <name>1</name>
        <sequence type="displayed"/>
    </isoform>
    <isoform>
        <id>P31785-2</id>
        <name>2</name>
        <sequence type="described" ref="VSP_047581 VSP_047582"/>
    </isoform>
</comment>
<comment type="domain">
    <text>The WSXWS motif appears to be necessary for proper protein folding and thereby efficient intracellular transport and cell-surface receptor binding.</text>
</comment>
<comment type="domain">
    <text>The box 1 motif is required for JAK interaction and/or activation.</text>
</comment>
<comment type="disease" evidence="8 9 10 12 13 14 15 16 18 19 20">
    <disease id="DI-01022">
        <name>Severe combined immunodeficiency X-linked T-cell-negative/B-cell-positive/NK-cell-negative</name>
        <acronym>XSCID</acronym>
        <description>A form of severe combined immunodeficiency (SCID), a genetically and clinically heterogeneous group of rare congenital disorders characterized by impairment of both humoral and cell-mediated immunity, leukopenia, and low or absent antibody levels. Patients present in infancy recurrent, persistent infections by opportunistic organisms. The common characteristic of all types of SCID is absence of T-cell-mediated cellular immunity due to a defect in T-cell development.</description>
        <dbReference type="MIM" id="300400"/>
    </disease>
    <text>The disease is caused by variants affecting the gene represented in this entry.</text>
</comment>
<comment type="disease" evidence="11 21">
    <disease id="DI-02437">
        <name>X-linked combined immunodeficiency</name>
        <acronym>XCID</acronym>
        <description>Less severe form of X-linked immunodeficiency with a less severe degree of deficiency in cellular and humoral immunity than that seen in XSCID.</description>
        <dbReference type="MIM" id="312863"/>
    </disease>
    <text>The disease is caused by variants affecting the gene represented in this entry.</text>
</comment>
<comment type="similarity">
    <text evidence="24">Belongs to the type I cytokine receptor family. Type 5 subfamily.</text>
</comment>
<comment type="online information" name="IL2RGbase">
    <link uri="http://research.nhgri.nih.gov/scid/"/>
    <text>X-linked SCID mutation database</text>
</comment>
<gene>
    <name type="primary">IL2RG</name>
</gene>
<dbReference type="EMBL" id="D11086">
    <property type="protein sequence ID" value="BAA01857.1"/>
    <property type="molecule type" value="mRNA"/>
</dbReference>
<dbReference type="EMBL" id="L12183">
    <property type="protein sequence ID" value="AAA59145.1"/>
    <property type="molecule type" value="Genomic_DNA"/>
</dbReference>
<dbReference type="EMBL" id="L12178">
    <property type="protein sequence ID" value="AAA59145.1"/>
    <property type="status" value="JOINED"/>
    <property type="molecule type" value="Genomic_DNA"/>
</dbReference>
<dbReference type="EMBL" id="L12176">
    <property type="protein sequence ID" value="AAA59145.1"/>
    <property type="status" value="JOINED"/>
    <property type="molecule type" value="Genomic_DNA"/>
</dbReference>
<dbReference type="EMBL" id="L12177">
    <property type="protein sequence ID" value="AAA59145.1"/>
    <property type="status" value="JOINED"/>
    <property type="molecule type" value="Genomic_DNA"/>
</dbReference>
<dbReference type="EMBL" id="L12179">
    <property type="protein sequence ID" value="AAA59145.1"/>
    <property type="status" value="JOINED"/>
    <property type="molecule type" value="Genomic_DNA"/>
</dbReference>
<dbReference type="EMBL" id="L12180">
    <property type="protein sequence ID" value="AAA59145.1"/>
    <property type="status" value="JOINED"/>
    <property type="molecule type" value="Genomic_DNA"/>
</dbReference>
<dbReference type="EMBL" id="L12181">
    <property type="protein sequence ID" value="AAA59145.1"/>
    <property type="status" value="JOINED"/>
    <property type="molecule type" value="Genomic_DNA"/>
</dbReference>
<dbReference type="EMBL" id="L12182">
    <property type="protein sequence ID" value="AAA59145.1"/>
    <property type="status" value="JOINED"/>
    <property type="molecule type" value="Genomic_DNA"/>
</dbReference>
<dbReference type="EMBL" id="L19546">
    <property type="protein sequence ID" value="AAC37524.1"/>
    <property type="molecule type" value="Genomic_DNA"/>
</dbReference>
<dbReference type="EMBL" id="AB102794">
    <property type="protein sequence ID" value="BAD89385.1"/>
    <property type="molecule type" value="mRNA"/>
</dbReference>
<dbReference type="EMBL" id="AY692262">
    <property type="protein sequence ID" value="AAT85803.1"/>
    <property type="molecule type" value="Genomic_DNA"/>
</dbReference>
<dbReference type="EMBL" id="AL590764">
    <property type="status" value="NOT_ANNOTATED_CDS"/>
    <property type="molecule type" value="Genomic_DNA"/>
</dbReference>
<dbReference type="EMBL" id="BC014972">
    <property type="protein sequence ID" value="AAH14972.1"/>
    <property type="molecule type" value="mRNA"/>
</dbReference>
<dbReference type="CCDS" id="CCDS14406.1">
    <molecule id="P31785-1"/>
</dbReference>
<dbReference type="PIR" id="A42565">
    <property type="entry name" value="A42565"/>
</dbReference>
<dbReference type="RefSeq" id="NP_000197.1">
    <molecule id="P31785-1"/>
    <property type="nucleotide sequence ID" value="NM_000206.3"/>
</dbReference>
<dbReference type="PDB" id="2B5I">
    <property type="method" value="X-ray"/>
    <property type="resolution" value="2.30 A"/>
    <property type="chains" value="C=56-254"/>
</dbReference>
<dbReference type="PDB" id="2ERJ">
    <property type="method" value="X-ray"/>
    <property type="resolution" value="3.00 A"/>
    <property type="chains" value="C/G=23-255"/>
</dbReference>
<dbReference type="PDB" id="3BPL">
    <property type="method" value="X-ray"/>
    <property type="resolution" value="2.93 A"/>
    <property type="chains" value="C=56-254"/>
</dbReference>
<dbReference type="PDB" id="3QAZ">
    <property type="method" value="X-ray"/>
    <property type="resolution" value="3.80 A"/>
    <property type="chains" value="C/F/I/L/O/R/U/X/a/d/g/j=56-254"/>
</dbReference>
<dbReference type="PDB" id="3QB7">
    <property type="method" value="X-ray"/>
    <property type="resolution" value="3.24 A"/>
    <property type="chains" value="C/D=55-254"/>
</dbReference>
<dbReference type="PDB" id="4GS7">
    <property type="method" value="X-ray"/>
    <property type="resolution" value="2.35 A"/>
    <property type="chains" value="C=55-254"/>
</dbReference>
<dbReference type="PDB" id="5M5E">
    <property type="method" value="X-ray"/>
    <property type="resolution" value="2.30 A"/>
    <property type="chains" value="C=23-262"/>
</dbReference>
<dbReference type="PDB" id="6OEL">
    <property type="method" value="X-ray"/>
    <property type="resolution" value="3.10 A"/>
    <property type="chains" value="C=61-249"/>
</dbReference>
<dbReference type="PDB" id="7S2R">
    <property type="method" value="X-ray"/>
    <property type="resolution" value="2.49 A"/>
    <property type="chains" value="A=54-254"/>
</dbReference>
<dbReference type="PDB" id="8ENT">
    <property type="method" value="X-ray"/>
    <property type="resolution" value="2.83 A"/>
    <property type="chains" value="C/F/I=55-254"/>
</dbReference>
<dbReference type="PDB" id="8EPA">
    <property type="method" value="EM"/>
    <property type="resolution" value="3.40 A"/>
    <property type="chains" value="I=23-262"/>
</dbReference>
<dbReference type="PDB" id="9JQT">
    <property type="method" value="EM"/>
    <property type="resolution" value="2.70 A"/>
    <property type="chains" value="A=23-262"/>
</dbReference>
<dbReference type="PDBsum" id="2B5I"/>
<dbReference type="PDBsum" id="2ERJ"/>
<dbReference type="PDBsum" id="3BPL"/>
<dbReference type="PDBsum" id="3QAZ"/>
<dbReference type="PDBsum" id="3QB7"/>
<dbReference type="PDBsum" id="4GS7"/>
<dbReference type="PDBsum" id="5M5E"/>
<dbReference type="PDBsum" id="6OEL"/>
<dbReference type="PDBsum" id="7S2R"/>
<dbReference type="PDBsum" id="8ENT"/>
<dbReference type="PDBsum" id="8EPA"/>
<dbReference type="PDBsum" id="9JQT"/>
<dbReference type="EMDB" id="EMD-28278"/>
<dbReference type="EMDB" id="EMD-28523"/>
<dbReference type="EMDB" id="EMD-61741"/>
<dbReference type="SMR" id="P31785"/>
<dbReference type="BioGRID" id="109776">
    <property type="interactions" value="26"/>
</dbReference>
<dbReference type="ComplexPortal" id="CPX-493">
    <property type="entry name" value="Interleukin-7 sIL7RA-IL2RG receptor-ligand potentiating complex"/>
</dbReference>
<dbReference type="ComplexPortal" id="CPX-627">
    <property type="entry name" value="Interleukin-15 receptor-ligand complex"/>
</dbReference>
<dbReference type="ComplexPortal" id="CPX-646">
    <property type="entry name" value="Interleukin-2 receptor-ligand complex"/>
</dbReference>
<dbReference type="ComplexPortal" id="CPX-833">
    <property type="entry name" value="Interleukin-21 receptor-ligand complex"/>
</dbReference>
<dbReference type="ComplexPortal" id="CPX-8834">
    <property type="entry name" value="Interleukin-4 receptor-ligand type-1 complex"/>
</dbReference>
<dbReference type="ComplexPortal" id="CPX-9102">
    <property type="entry name" value="Interleukin-7 mIL7R-IL2RG receptor-ligand signalling complex"/>
</dbReference>
<dbReference type="CORUM" id="P31785"/>
<dbReference type="DIP" id="DIP-173N"/>
<dbReference type="FunCoup" id="P31785">
    <property type="interactions" value="993"/>
</dbReference>
<dbReference type="IntAct" id="P31785">
    <property type="interactions" value="18"/>
</dbReference>
<dbReference type="STRING" id="9606.ENSP00000363318"/>
<dbReference type="ChEMBL" id="CHEMBL2364167"/>
<dbReference type="ChEMBL" id="CHEMBL4665588"/>
<dbReference type="ChEMBL" id="CHEMBL4665592"/>
<dbReference type="DrugBank" id="DB00041">
    <property type="generic name" value="Aldesleukin"/>
</dbReference>
<dbReference type="DrugBank" id="DB16479">
    <property type="generic name" value="Inbakicept"/>
</dbReference>
<dbReference type="DrugBank" id="DB18740">
    <property type="generic name" value="Nogapendekin alfa"/>
</dbReference>
<dbReference type="DrugBank" id="DB05943">
    <property type="generic name" value="Resatorvid"/>
</dbReference>
<dbReference type="DrugCentral" id="P31785"/>
<dbReference type="GuidetoPHARMACOLOGY" id="2303"/>
<dbReference type="GlyCosmos" id="P31785">
    <property type="glycosylation" value="6 sites, No reported glycans"/>
</dbReference>
<dbReference type="GlyGen" id="P31785">
    <property type="glycosylation" value="8 sites"/>
</dbReference>
<dbReference type="iPTMnet" id="P31785"/>
<dbReference type="PhosphoSitePlus" id="P31785"/>
<dbReference type="BioMuta" id="IL2RG"/>
<dbReference type="DMDM" id="400048"/>
<dbReference type="jPOST" id="P31785"/>
<dbReference type="MassIVE" id="P31785"/>
<dbReference type="PaxDb" id="9606-ENSP00000363318"/>
<dbReference type="PeptideAtlas" id="P31785"/>
<dbReference type="ProteomicsDB" id="54802">
    <molecule id="P31785-1"/>
</dbReference>
<dbReference type="ProteomicsDB" id="62802"/>
<dbReference type="ABCD" id="P31785">
    <property type="antibodies" value="1 sequenced antibody"/>
</dbReference>
<dbReference type="Antibodypedia" id="27479">
    <property type="antibodies" value="639 antibodies from 37 providers"/>
</dbReference>
<dbReference type="CPTC" id="P31785">
    <property type="antibodies" value="1 antibody"/>
</dbReference>
<dbReference type="DNASU" id="3561"/>
<dbReference type="Ensembl" id="ENST00000374202.7">
    <molecule id="P31785-1"/>
    <property type="protein sequence ID" value="ENSP00000363318.3"/>
    <property type="gene ID" value="ENSG00000147168.14"/>
</dbReference>
<dbReference type="GeneID" id="3561"/>
<dbReference type="KEGG" id="hsa:3561"/>
<dbReference type="MANE-Select" id="ENST00000374202.7">
    <property type="protein sequence ID" value="ENSP00000363318.3"/>
    <property type="RefSeq nucleotide sequence ID" value="NM_000206.3"/>
    <property type="RefSeq protein sequence ID" value="NP_000197.1"/>
</dbReference>
<dbReference type="UCSC" id="uc004dyw.4">
    <molecule id="P31785-1"/>
    <property type="organism name" value="human"/>
</dbReference>
<dbReference type="AGR" id="HGNC:6010"/>
<dbReference type="CTD" id="3561"/>
<dbReference type="DisGeNET" id="3561"/>
<dbReference type="GeneCards" id="IL2RG"/>
<dbReference type="GeneReviews" id="IL2RG"/>
<dbReference type="HGNC" id="HGNC:6010">
    <property type="gene designation" value="IL2RG"/>
</dbReference>
<dbReference type="HPA" id="ENSG00000147168">
    <property type="expression patterns" value="Tissue enhanced (intestine, lymphoid tissue)"/>
</dbReference>
<dbReference type="MalaCards" id="IL2RG"/>
<dbReference type="MIM" id="300400">
    <property type="type" value="phenotype"/>
</dbReference>
<dbReference type="MIM" id="308380">
    <property type="type" value="gene"/>
</dbReference>
<dbReference type="MIM" id="312863">
    <property type="type" value="phenotype"/>
</dbReference>
<dbReference type="neXtProt" id="NX_P31785"/>
<dbReference type="OpenTargets" id="ENSG00000147168"/>
<dbReference type="Orphanet" id="39041">
    <property type="disease" value="Omenn syndrome"/>
</dbReference>
<dbReference type="Orphanet" id="276">
    <property type="disease" value="T-B+ severe combined immunodeficiency due to gamma chain deficiency"/>
</dbReference>
<dbReference type="PharmGKB" id="PA196"/>
<dbReference type="VEuPathDB" id="HostDB:ENSG00000147168"/>
<dbReference type="eggNOG" id="ENOG502S289">
    <property type="taxonomic scope" value="Eukaryota"/>
</dbReference>
<dbReference type="GeneTree" id="ENSGT00510000048979"/>
<dbReference type="HOGENOM" id="CLU_060544_1_0_1"/>
<dbReference type="InParanoid" id="P31785"/>
<dbReference type="OMA" id="TAGCWLQ"/>
<dbReference type="OrthoDB" id="8942047at2759"/>
<dbReference type="PAN-GO" id="P31785">
    <property type="GO annotations" value="5 GO annotations based on evolutionary models"/>
</dbReference>
<dbReference type="PhylomeDB" id="P31785"/>
<dbReference type="TreeFam" id="TF333657"/>
<dbReference type="PathwayCommons" id="P31785"/>
<dbReference type="Reactome" id="R-HSA-1266695">
    <property type="pathway name" value="Interleukin-7 signaling"/>
</dbReference>
<dbReference type="Reactome" id="R-HSA-5673001">
    <property type="pathway name" value="RAF/MAP kinase cascade"/>
</dbReference>
<dbReference type="Reactome" id="R-HSA-6785807">
    <property type="pathway name" value="Interleukin-4 and Interleukin-13 signaling"/>
</dbReference>
<dbReference type="Reactome" id="R-HSA-8983432">
    <property type="pathway name" value="Interleukin-15 signaling"/>
</dbReference>
<dbReference type="Reactome" id="R-HSA-8985947">
    <property type="pathway name" value="Interleukin-9 signaling"/>
</dbReference>
<dbReference type="Reactome" id="R-HSA-9020558">
    <property type="pathway name" value="Interleukin-2 signaling"/>
</dbReference>
<dbReference type="Reactome" id="R-HSA-9020958">
    <property type="pathway name" value="Interleukin-21 signaling"/>
</dbReference>
<dbReference type="Reactome" id="R-HSA-912526">
    <property type="pathway name" value="Interleukin receptor SHC signaling"/>
</dbReference>
<dbReference type="Reactome" id="R-HSA-9701898">
    <property type="pathway name" value="STAT3 nuclear events downstream of ALK signaling"/>
</dbReference>
<dbReference type="SignaLink" id="P31785"/>
<dbReference type="SIGNOR" id="P31785"/>
<dbReference type="BioGRID-ORCS" id="3561">
    <property type="hits" value="14 hits in 788 CRISPR screens"/>
</dbReference>
<dbReference type="ChiTaRS" id="IL2RG">
    <property type="organism name" value="human"/>
</dbReference>
<dbReference type="EvolutionaryTrace" id="P31785"/>
<dbReference type="GeneWiki" id="Common_gamma_chain"/>
<dbReference type="GenomeRNAi" id="3561"/>
<dbReference type="Pharos" id="P31785">
    <property type="development level" value="Tclin"/>
</dbReference>
<dbReference type="PRO" id="PR:P31785"/>
<dbReference type="Proteomes" id="UP000005640">
    <property type="component" value="Chromosome X"/>
</dbReference>
<dbReference type="RNAct" id="P31785">
    <property type="molecule type" value="protein"/>
</dbReference>
<dbReference type="Bgee" id="ENSG00000147168">
    <property type="expression patterns" value="Expressed in granulocyte and 149 other cell types or tissues"/>
</dbReference>
<dbReference type="ExpressionAtlas" id="P31785">
    <property type="expression patterns" value="baseline and differential"/>
</dbReference>
<dbReference type="GO" id="GO:0009986">
    <property type="term" value="C:cell surface"/>
    <property type="evidence" value="ECO:0000314"/>
    <property type="project" value="UniProtKB"/>
</dbReference>
<dbReference type="GO" id="GO:0005829">
    <property type="term" value="C:cytosol"/>
    <property type="evidence" value="ECO:0000304"/>
    <property type="project" value="Reactome"/>
</dbReference>
<dbReference type="GO" id="GO:0005768">
    <property type="term" value="C:endosome"/>
    <property type="evidence" value="ECO:0000304"/>
    <property type="project" value="Reactome"/>
</dbReference>
<dbReference type="GO" id="GO:0009897">
    <property type="term" value="C:external side of plasma membrane"/>
    <property type="evidence" value="ECO:0000250"/>
    <property type="project" value="UniProtKB"/>
</dbReference>
<dbReference type="GO" id="GO:0016020">
    <property type="term" value="C:membrane"/>
    <property type="evidence" value="ECO:0007005"/>
    <property type="project" value="UniProtKB"/>
</dbReference>
<dbReference type="GO" id="GO:0005654">
    <property type="term" value="C:nucleoplasm"/>
    <property type="evidence" value="ECO:0000314"/>
    <property type="project" value="HPA"/>
</dbReference>
<dbReference type="GO" id="GO:0005886">
    <property type="term" value="C:plasma membrane"/>
    <property type="evidence" value="ECO:0000314"/>
    <property type="project" value="HPA"/>
</dbReference>
<dbReference type="GO" id="GO:0043235">
    <property type="term" value="C:receptor complex"/>
    <property type="evidence" value="ECO:0000318"/>
    <property type="project" value="GO_Central"/>
</dbReference>
<dbReference type="GO" id="GO:0015026">
    <property type="term" value="F:coreceptor activity"/>
    <property type="evidence" value="ECO:0000314"/>
    <property type="project" value="UniProt"/>
</dbReference>
<dbReference type="GO" id="GO:0019955">
    <property type="term" value="F:cytokine binding"/>
    <property type="evidence" value="ECO:0000318"/>
    <property type="project" value="GO_Central"/>
</dbReference>
<dbReference type="GO" id="GO:0004896">
    <property type="term" value="F:cytokine receptor activity"/>
    <property type="evidence" value="ECO:0000318"/>
    <property type="project" value="GO_Central"/>
</dbReference>
<dbReference type="GO" id="GO:0042010">
    <property type="term" value="F:interleukin-15 receptor activity"/>
    <property type="evidence" value="ECO:0000314"/>
    <property type="project" value="UniProtKB"/>
</dbReference>
<dbReference type="GO" id="GO:0019976">
    <property type="term" value="F:interleukin-2 binding"/>
    <property type="evidence" value="ECO:0000250"/>
    <property type="project" value="UniProtKB"/>
</dbReference>
<dbReference type="GO" id="GO:0002361">
    <property type="term" value="P:CD4-positive, CD25-positive, alpha-beta regulatory T cell differentiation"/>
    <property type="evidence" value="ECO:0007669"/>
    <property type="project" value="Ensembl"/>
</dbReference>
<dbReference type="GO" id="GO:0019725">
    <property type="term" value="P:cellular homeostasis"/>
    <property type="evidence" value="ECO:0000314"/>
    <property type="project" value="UniProt"/>
</dbReference>
<dbReference type="GO" id="GO:0019221">
    <property type="term" value="P:cytokine-mediated signaling pathway"/>
    <property type="evidence" value="ECO:0000318"/>
    <property type="project" value="GO_Central"/>
</dbReference>
<dbReference type="GO" id="GO:0010467">
    <property type="term" value="P:gene expression"/>
    <property type="evidence" value="ECO:0007669"/>
    <property type="project" value="Ensembl"/>
</dbReference>
<dbReference type="GO" id="GO:0006955">
    <property type="term" value="P:immune response"/>
    <property type="evidence" value="ECO:0000304"/>
    <property type="project" value="ProtInc"/>
</dbReference>
<dbReference type="GO" id="GO:0035723">
    <property type="term" value="P:interleukin-15-mediated signaling pathway"/>
    <property type="evidence" value="ECO:0000315"/>
    <property type="project" value="UniProtKB"/>
</dbReference>
<dbReference type="GO" id="GO:0038110">
    <property type="term" value="P:interleukin-2-mediated signaling pathway"/>
    <property type="evidence" value="ECO:0000314"/>
    <property type="project" value="UniProt"/>
</dbReference>
<dbReference type="GO" id="GO:0035771">
    <property type="term" value="P:interleukin-4-mediated signaling pathway"/>
    <property type="evidence" value="ECO:0007669"/>
    <property type="project" value="GOC"/>
</dbReference>
<dbReference type="GO" id="GO:0038111">
    <property type="term" value="P:interleukin-7-mediated signaling pathway"/>
    <property type="evidence" value="ECO:0000314"/>
    <property type="project" value="UniProt"/>
</dbReference>
<dbReference type="GO" id="GO:0038113">
    <property type="term" value="P:interleukin-9-mediated signaling pathway"/>
    <property type="evidence" value="ECO:0000314"/>
    <property type="project" value="UniProt"/>
</dbReference>
<dbReference type="GO" id="GO:0030098">
    <property type="term" value="P:lymphocyte differentiation"/>
    <property type="evidence" value="ECO:0000318"/>
    <property type="project" value="GO_Central"/>
</dbReference>
<dbReference type="GO" id="GO:0002335">
    <property type="term" value="P:mature B cell differentiation"/>
    <property type="evidence" value="ECO:0007669"/>
    <property type="project" value="Ensembl"/>
</dbReference>
<dbReference type="GO" id="GO:0045579">
    <property type="term" value="P:positive regulation of B cell differentiation"/>
    <property type="evidence" value="ECO:0007669"/>
    <property type="project" value="Ensembl"/>
</dbReference>
<dbReference type="GO" id="GO:0032831">
    <property type="term" value="P:positive regulation of CD4-positive, CD25-positive, alpha-beta regulatory T cell differentiation"/>
    <property type="evidence" value="ECO:0007669"/>
    <property type="project" value="Ensembl"/>
</dbReference>
<dbReference type="GO" id="GO:0002639">
    <property type="term" value="P:positive regulation of immunoglobulin production"/>
    <property type="evidence" value="ECO:0000318"/>
    <property type="project" value="GO_Central"/>
</dbReference>
<dbReference type="GO" id="GO:0050766">
    <property type="term" value="P:positive regulation of phagocytosis"/>
    <property type="evidence" value="ECO:0000315"/>
    <property type="project" value="UniProtKB"/>
</dbReference>
<dbReference type="GO" id="GO:0033089">
    <property type="term" value="P:positive regulation of T cell differentiation in thymus"/>
    <property type="evidence" value="ECO:0007669"/>
    <property type="project" value="Ensembl"/>
</dbReference>
<dbReference type="GO" id="GO:0007165">
    <property type="term" value="P:signal transduction"/>
    <property type="evidence" value="ECO:0000303"/>
    <property type="project" value="ProtInc"/>
</dbReference>
<dbReference type="GO" id="GO:0033077">
    <property type="term" value="P:T cell differentiation in thymus"/>
    <property type="evidence" value="ECO:0007669"/>
    <property type="project" value="Ensembl"/>
</dbReference>
<dbReference type="CDD" id="cd00063">
    <property type="entry name" value="FN3"/>
    <property type="match status" value="1"/>
</dbReference>
<dbReference type="FunFam" id="2.60.40.10:FF:000754">
    <property type="entry name" value="Cytokine receptor common subunit gamma"/>
    <property type="match status" value="1"/>
</dbReference>
<dbReference type="FunFam" id="2.60.40.10:FF:001183">
    <property type="entry name" value="Cytokine receptor common subunit gamma"/>
    <property type="match status" value="1"/>
</dbReference>
<dbReference type="Gene3D" id="2.60.40.10">
    <property type="entry name" value="Immunoglobulins"/>
    <property type="match status" value="2"/>
</dbReference>
<dbReference type="InterPro" id="IPR048648">
    <property type="entry name" value="CRLF2-like_D2"/>
</dbReference>
<dbReference type="InterPro" id="IPR003961">
    <property type="entry name" value="FN3_dom"/>
</dbReference>
<dbReference type="InterPro" id="IPR036116">
    <property type="entry name" value="FN3_sf"/>
</dbReference>
<dbReference type="InterPro" id="IPR003531">
    <property type="entry name" value="Hempt_rcpt_S_F1_CS"/>
</dbReference>
<dbReference type="InterPro" id="IPR013783">
    <property type="entry name" value="Ig-like_fold"/>
</dbReference>
<dbReference type="InterPro" id="IPR053856">
    <property type="entry name" value="TSLPR_D1"/>
</dbReference>
<dbReference type="PANTHER" id="PTHR23037">
    <property type="entry name" value="CYTOKINE RECEPTOR"/>
    <property type="match status" value="1"/>
</dbReference>
<dbReference type="PANTHER" id="PTHR23037:SF47">
    <property type="entry name" value="INTERLEUKIN 2 RECEPTOR SUBUNIT GAMMA"/>
    <property type="match status" value="1"/>
</dbReference>
<dbReference type="Pfam" id="PF21605">
    <property type="entry name" value="CRLF2-like_D2"/>
    <property type="match status" value="1"/>
</dbReference>
<dbReference type="Pfam" id="PF22012">
    <property type="entry name" value="TSLPR_D1"/>
    <property type="match status" value="1"/>
</dbReference>
<dbReference type="SUPFAM" id="SSF49265">
    <property type="entry name" value="Fibronectin type III"/>
    <property type="match status" value="2"/>
</dbReference>
<dbReference type="PROSITE" id="PS50853">
    <property type="entry name" value="FN3"/>
    <property type="match status" value="1"/>
</dbReference>
<dbReference type="PROSITE" id="PS01355">
    <property type="entry name" value="HEMATOPO_REC_S_F1"/>
    <property type="match status" value="1"/>
</dbReference>
<protein>
    <recommendedName>
        <fullName>Cytokine receptor common subunit gamma</fullName>
    </recommendedName>
    <alternativeName>
        <fullName>Interleukin-2 receptor subunit gamma</fullName>
        <shortName>IL-2 receptor subunit gamma</shortName>
        <shortName>IL-2R subunit gamma</shortName>
        <shortName>IL-2RG</shortName>
    </alternativeName>
    <alternativeName>
        <fullName>gammaC</fullName>
    </alternativeName>
    <alternativeName>
        <fullName>p64</fullName>
    </alternativeName>
    <cdAntigenName>CD132</cdAntigenName>
</protein>
<proteinExistence type="evidence at protein level"/>
<reference key="1">
    <citation type="journal article" date="1992" name="Science">
        <title>Cloning of the gamma chain of the human IL-2 receptor.</title>
        <authorList>
            <person name="Takeshita T."/>
            <person name="Asao H."/>
            <person name="Ohtani K."/>
            <person name="Ishii N."/>
            <person name="Kumaki S."/>
            <person name="Tanaka N."/>
            <person name="Munakata H."/>
            <person name="Nakamura M."/>
            <person name="Sugamura K."/>
        </authorList>
    </citation>
    <scope>NUCLEOTIDE SEQUENCE [MRNA] (ISOFORM 1)</scope>
    <scope>PARTIAL PROTEIN SEQUENCE</scope>
</reference>
<reference key="2">
    <citation type="journal article" date="1993" name="J. Biol. Chem.">
        <title>Characterization of the human interleukin-2 receptor gamma chain gene.</title>
        <authorList>
            <person name="Noguchi M."/>
            <person name="Adelstein S."/>
            <person name="Cao X."/>
            <person name="Leonard W.J."/>
        </authorList>
    </citation>
    <scope>NUCLEOTIDE SEQUENCE [GENOMIC DNA]</scope>
    <source>
        <tissue>Liver</tissue>
    </source>
</reference>
<reference key="3">
    <citation type="journal article" date="1993" name="Hum. Mol. Genet.">
        <title>The interleukin-2 receptor gamma chain maps to Xq13.1 and is mutated in X-linked severe combined immunodeficiency, SCIDX1.</title>
        <authorList>
            <person name="Puck J.M."/>
            <person name="Deschenes S.M."/>
            <person name="Porter J.C."/>
            <person name="Dutra A.S."/>
            <person name="Brown C.J."/>
            <person name="Willard H."/>
            <person name="Henthorn P.S."/>
        </authorList>
    </citation>
    <scope>NUCLEOTIDE SEQUENCE [GENOMIC DNA]</scope>
    <scope>VARIANTS XSCID ASP-114 AND ASN-153</scope>
</reference>
<reference key="4">
    <citation type="submission" date="2003-02" db="EMBL/GenBank/DDBJ databases">
        <title>IL2RG mRNA, nirs splice variant 2.</title>
        <authorList>
            <person name="Hayashi A."/>
            <person name="Sameshima E."/>
            <person name="Tabata Y."/>
            <person name="Iida K."/>
            <person name="Mitsuyama M."/>
            <person name="Kanai S."/>
            <person name="Furuya T."/>
            <person name="Saito T."/>
        </authorList>
    </citation>
    <scope>NUCLEOTIDE SEQUENCE [MRNA] (ISOFORM 2)</scope>
</reference>
<reference key="5">
    <citation type="submission" date="2004-07" db="EMBL/GenBank/DDBJ databases">
        <authorList>
            <consortium name="SeattleSNPs variation discovery resource"/>
        </authorList>
    </citation>
    <scope>NUCLEOTIDE SEQUENCE [GENOMIC DNA]</scope>
    <scope>VARIANT LYS-109</scope>
</reference>
<reference key="6">
    <citation type="journal article" date="2005" name="Nature">
        <title>The DNA sequence of the human X chromosome.</title>
        <authorList>
            <person name="Ross M.T."/>
            <person name="Grafham D.V."/>
            <person name="Coffey A.J."/>
            <person name="Scherer S."/>
            <person name="McLay K."/>
            <person name="Muzny D."/>
            <person name="Platzer M."/>
            <person name="Howell G.R."/>
            <person name="Burrows C."/>
            <person name="Bird C.P."/>
            <person name="Frankish A."/>
            <person name="Lovell F.L."/>
            <person name="Howe K.L."/>
            <person name="Ashurst J.L."/>
            <person name="Fulton R.S."/>
            <person name="Sudbrak R."/>
            <person name="Wen G."/>
            <person name="Jones M.C."/>
            <person name="Hurles M.E."/>
            <person name="Andrews T.D."/>
            <person name="Scott C.E."/>
            <person name="Searle S."/>
            <person name="Ramser J."/>
            <person name="Whittaker A."/>
            <person name="Deadman R."/>
            <person name="Carter N.P."/>
            <person name="Hunt S.E."/>
            <person name="Chen R."/>
            <person name="Cree A."/>
            <person name="Gunaratne P."/>
            <person name="Havlak P."/>
            <person name="Hodgson A."/>
            <person name="Metzker M.L."/>
            <person name="Richards S."/>
            <person name="Scott G."/>
            <person name="Steffen D."/>
            <person name="Sodergren E."/>
            <person name="Wheeler D.A."/>
            <person name="Worley K.C."/>
            <person name="Ainscough R."/>
            <person name="Ambrose K.D."/>
            <person name="Ansari-Lari M.A."/>
            <person name="Aradhya S."/>
            <person name="Ashwell R.I."/>
            <person name="Babbage A.K."/>
            <person name="Bagguley C.L."/>
            <person name="Ballabio A."/>
            <person name="Banerjee R."/>
            <person name="Barker G.E."/>
            <person name="Barlow K.F."/>
            <person name="Barrett I.P."/>
            <person name="Bates K.N."/>
            <person name="Beare D.M."/>
            <person name="Beasley H."/>
            <person name="Beasley O."/>
            <person name="Beck A."/>
            <person name="Bethel G."/>
            <person name="Blechschmidt K."/>
            <person name="Brady N."/>
            <person name="Bray-Allen S."/>
            <person name="Bridgeman A.M."/>
            <person name="Brown A.J."/>
            <person name="Brown M.J."/>
            <person name="Bonnin D."/>
            <person name="Bruford E.A."/>
            <person name="Buhay C."/>
            <person name="Burch P."/>
            <person name="Burford D."/>
            <person name="Burgess J."/>
            <person name="Burrill W."/>
            <person name="Burton J."/>
            <person name="Bye J.M."/>
            <person name="Carder C."/>
            <person name="Carrel L."/>
            <person name="Chako J."/>
            <person name="Chapman J.C."/>
            <person name="Chavez D."/>
            <person name="Chen E."/>
            <person name="Chen G."/>
            <person name="Chen Y."/>
            <person name="Chen Z."/>
            <person name="Chinault C."/>
            <person name="Ciccodicola A."/>
            <person name="Clark S.Y."/>
            <person name="Clarke G."/>
            <person name="Clee C.M."/>
            <person name="Clegg S."/>
            <person name="Clerc-Blankenburg K."/>
            <person name="Clifford K."/>
            <person name="Cobley V."/>
            <person name="Cole C.G."/>
            <person name="Conquer J.S."/>
            <person name="Corby N."/>
            <person name="Connor R.E."/>
            <person name="David R."/>
            <person name="Davies J."/>
            <person name="Davis C."/>
            <person name="Davis J."/>
            <person name="Delgado O."/>
            <person name="Deshazo D."/>
            <person name="Dhami P."/>
            <person name="Ding Y."/>
            <person name="Dinh H."/>
            <person name="Dodsworth S."/>
            <person name="Draper H."/>
            <person name="Dugan-Rocha S."/>
            <person name="Dunham A."/>
            <person name="Dunn M."/>
            <person name="Durbin K.J."/>
            <person name="Dutta I."/>
            <person name="Eades T."/>
            <person name="Ellwood M."/>
            <person name="Emery-Cohen A."/>
            <person name="Errington H."/>
            <person name="Evans K.L."/>
            <person name="Faulkner L."/>
            <person name="Francis F."/>
            <person name="Frankland J."/>
            <person name="Fraser A.E."/>
            <person name="Galgoczy P."/>
            <person name="Gilbert J."/>
            <person name="Gill R."/>
            <person name="Gloeckner G."/>
            <person name="Gregory S.G."/>
            <person name="Gribble S."/>
            <person name="Griffiths C."/>
            <person name="Grocock R."/>
            <person name="Gu Y."/>
            <person name="Gwilliam R."/>
            <person name="Hamilton C."/>
            <person name="Hart E.A."/>
            <person name="Hawes A."/>
            <person name="Heath P.D."/>
            <person name="Heitmann K."/>
            <person name="Hennig S."/>
            <person name="Hernandez J."/>
            <person name="Hinzmann B."/>
            <person name="Ho S."/>
            <person name="Hoffs M."/>
            <person name="Howden P.J."/>
            <person name="Huckle E.J."/>
            <person name="Hume J."/>
            <person name="Hunt P.J."/>
            <person name="Hunt A.R."/>
            <person name="Isherwood J."/>
            <person name="Jacob L."/>
            <person name="Johnson D."/>
            <person name="Jones S."/>
            <person name="de Jong P.J."/>
            <person name="Joseph S.S."/>
            <person name="Keenan S."/>
            <person name="Kelly S."/>
            <person name="Kershaw J.K."/>
            <person name="Khan Z."/>
            <person name="Kioschis P."/>
            <person name="Klages S."/>
            <person name="Knights A.J."/>
            <person name="Kosiura A."/>
            <person name="Kovar-Smith C."/>
            <person name="Laird G.K."/>
            <person name="Langford C."/>
            <person name="Lawlor S."/>
            <person name="Leversha M."/>
            <person name="Lewis L."/>
            <person name="Liu W."/>
            <person name="Lloyd C."/>
            <person name="Lloyd D.M."/>
            <person name="Loulseged H."/>
            <person name="Loveland J.E."/>
            <person name="Lovell J.D."/>
            <person name="Lozado R."/>
            <person name="Lu J."/>
            <person name="Lyne R."/>
            <person name="Ma J."/>
            <person name="Maheshwari M."/>
            <person name="Matthews L.H."/>
            <person name="McDowall J."/>
            <person name="McLaren S."/>
            <person name="McMurray A."/>
            <person name="Meidl P."/>
            <person name="Meitinger T."/>
            <person name="Milne S."/>
            <person name="Miner G."/>
            <person name="Mistry S.L."/>
            <person name="Morgan M."/>
            <person name="Morris S."/>
            <person name="Mueller I."/>
            <person name="Mullikin J.C."/>
            <person name="Nguyen N."/>
            <person name="Nordsiek G."/>
            <person name="Nyakatura G."/>
            <person name="O'dell C.N."/>
            <person name="Okwuonu G."/>
            <person name="Palmer S."/>
            <person name="Pandian R."/>
            <person name="Parker D."/>
            <person name="Parrish J."/>
            <person name="Pasternak S."/>
            <person name="Patel D."/>
            <person name="Pearce A.V."/>
            <person name="Pearson D.M."/>
            <person name="Pelan S.E."/>
            <person name="Perez L."/>
            <person name="Porter K.M."/>
            <person name="Ramsey Y."/>
            <person name="Reichwald K."/>
            <person name="Rhodes S."/>
            <person name="Ridler K.A."/>
            <person name="Schlessinger D."/>
            <person name="Schueler M.G."/>
            <person name="Sehra H.K."/>
            <person name="Shaw-Smith C."/>
            <person name="Shen H."/>
            <person name="Sheridan E.M."/>
            <person name="Shownkeen R."/>
            <person name="Skuce C.D."/>
            <person name="Smith M.L."/>
            <person name="Sotheran E.C."/>
            <person name="Steingruber H.E."/>
            <person name="Steward C.A."/>
            <person name="Storey R."/>
            <person name="Swann R.M."/>
            <person name="Swarbreck D."/>
            <person name="Tabor P.E."/>
            <person name="Taudien S."/>
            <person name="Taylor T."/>
            <person name="Teague B."/>
            <person name="Thomas K."/>
            <person name="Thorpe A."/>
            <person name="Timms K."/>
            <person name="Tracey A."/>
            <person name="Trevanion S."/>
            <person name="Tromans A.C."/>
            <person name="d'Urso M."/>
            <person name="Verduzco D."/>
            <person name="Villasana D."/>
            <person name="Waldron L."/>
            <person name="Wall M."/>
            <person name="Wang Q."/>
            <person name="Warren J."/>
            <person name="Warry G.L."/>
            <person name="Wei X."/>
            <person name="West A."/>
            <person name="Whitehead S.L."/>
            <person name="Whiteley M.N."/>
            <person name="Wilkinson J.E."/>
            <person name="Willey D.L."/>
            <person name="Williams G."/>
            <person name="Williams L."/>
            <person name="Williamson A."/>
            <person name="Williamson H."/>
            <person name="Wilming L."/>
            <person name="Woodmansey R.L."/>
            <person name="Wray P.W."/>
            <person name="Yen J."/>
            <person name="Zhang J."/>
            <person name="Zhou J."/>
            <person name="Zoghbi H."/>
            <person name="Zorilla S."/>
            <person name="Buck D."/>
            <person name="Reinhardt R."/>
            <person name="Poustka A."/>
            <person name="Rosenthal A."/>
            <person name="Lehrach H."/>
            <person name="Meindl A."/>
            <person name="Minx P.J."/>
            <person name="Hillier L.W."/>
            <person name="Willard H.F."/>
            <person name="Wilson R.K."/>
            <person name="Waterston R.H."/>
            <person name="Rice C.M."/>
            <person name="Vaudin M."/>
            <person name="Coulson A."/>
            <person name="Nelson D.L."/>
            <person name="Weinstock G."/>
            <person name="Sulston J.E."/>
            <person name="Durbin R.M."/>
            <person name="Hubbard T."/>
            <person name="Gibbs R.A."/>
            <person name="Beck S."/>
            <person name="Rogers J."/>
            <person name="Bentley D.R."/>
        </authorList>
    </citation>
    <scope>NUCLEOTIDE SEQUENCE [LARGE SCALE GENOMIC DNA]</scope>
</reference>
<reference key="7">
    <citation type="journal article" date="2004" name="Genome Res.">
        <title>The status, quality, and expansion of the NIH full-length cDNA project: the Mammalian Gene Collection (MGC).</title>
        <authorList>
            <consortium name="The MGC Project Team"/>
        </authorList>
    </citation>
    <scope>NUCLEOTIDE SEQUENCE [LARGE SCALE MRNA] (ISOFORM 1)</scope>
    <source>
        <tissue>B-cell</tissue>
    </source>
</reference>
<reference key="8">
    <citation type="journal article" date="1993" name="Science">
        <title>Sharing of the interleukin-2 (IL-2) receptor gamma chain between receptors for IL-2 and IL-4.</title>
        <authorList>
            <person name="Kondo M."/>
            <person name="Takeshita T."/>
            <person name="Ishii N."/>
            <person name="Nakamura M."/>
            <person name="Watanabe S."/>
            <person name="Arai K."/>
            <person name="Sugamura K."/>
        </authorList>
    </citation>
    <scope>IDENTIFICATION AS A IL4R SUBUNIT</scope>
</reference>
<reference key="9">
    <citation type="journal article" date="1993" name="Science">
        <title>Interleukin-2 receptor gamma chain: a functional component of the interleukin-4 receptor.</title>
        <authorList>
            <person name="Russell S.M."/>
            <person name="Kkegan A.D."/>
            <person name="Harada N."/>
            <person name="Nakamura Y."/>
            <person name="Noguchi M."/>
            <person name="Leland P."/>
            <person name="Friedmann M.C."/>
            <person name="Miyajima A."/>
            <person name="Puri R.K."/>
            <person name="Paul W.E."/>
            <person name="Leonard W.J."/>
        </authorList>
    </citation>
    <scope>IDENTIFICATION AS A IL4R SUBUNIT</scope>
</reference>
<reference key="10">
    <citation type="journal article" date="1993" name="Science">
        <title>Interleukin-2 receptor gamma chain: a functional component of the interleukin-7 receptor.</title>
        <authorList>
            <person name="Noguchi M."/>
            <person name="Nakamura Y."/>
            <person name="Russell S.M."/>
            <person name="Ziegler S.F."/>
            <person name="Tsang M."/>
            <person name="Cao X."/>
            <person name="Leonard W.J."/>
        </authorList>
    </citation>
    <scope>IDENTIFICATION AS A IL7R SUBUNIT</scope>
</reference>
<reference key="11">
    <citation type="journal article" date="1996" name="J. Virol.">
        <title>The human T-cell leukemia/lymphotropic virus type 1 p12I proteins bind the interleukin-2 receptor beta and gammac chains and affects their expression on the cell surface.</title>
        <authorList>
            <person name="Mulloy J.C."/>
            <person name="Crownley R.W."/>
            <person name="Fullen J."/>
            <person name="Leonard W.J."/>
            <person name="Franchini G."/>
        </authorList>
    </citation>
    <scope>INTERACTION WITH HTLV-1 ACCESSORY PROTEIN P12I (MICROBIAL INFECTION)</scope>
</reference>
<reference key="12">
    <citation type="journal article" date="2002" name="Biochem. Biophys. Res. Commun.">
        <title>IL-2 receptor signaling through the Shb adapter protein in T and NK cells.</title>
        <authorList>
            <person name="Lindholm C.K."/>
        </authorList>
    </citation>
    <scope>INTERACTION WITH SHB</scope>
</reference>
<reference key="13">
    <citation type="journal article" date="2004" name="J. Leukoc. Biol.">
        <title>Interleukin-15 enhances human neutrophil phagocytosis by a Syk-dependent mechanism: importance of the IL-15Ralpha chain.</title>
        <authorList>
            <person name="Ratthe C."/>
            <person name="Girard D."/>
        </authorList>
    </citation>
    <scope>FUNCTION</scope>
    <scope>SUBCELLULAR LOCATION</scope>
</reference>
<reference key="14">
    <citation type="journal article" date="2009" name="Sci. Signal.">
        <title>Quantitative phosphoproteomic analysis of T cell receptor signaling reveals system-wide modulation of protein-protein interactions.</title>
        <authorList>
            <person name="Mayya V."/>
            <person name="Lundgren D.H."/>
            <person name="Hwang S.-I."/>
            <person name="Rezaul K."/>
            <person name="Wu L."/>
            <person name="Eng J.K."/>
            <person name="Rodionov V."/>
            <person name="Han D.K."/>
        </authorList>
    </citation>
    <scope>PHOSPHORYLATION [LARGE SCALE ANALYSIS] AT THR-292</scope>
    <scope>IDENTIFICATION BY MASS SPECTROMETRY [LARGE SCALE ANALYSIS]</scope>
    <source>
        <tissue>Leukemic T-cell</tissue>
    </source>
</reference>
<reference key="15">
    <citation type="journal article" date="1994" name="Structure">
        <title>The interleukin-2 and interleukin-4 receptors studied by molecular modelling.</title>
        <authorList>
            <person name="Bamborough P."/>
            <person name="Hedgecock C.J."/>
            <person name="Richards W.G."/>
        </authorList>
    </citation>
    <scope>3D-STRUCTURE MODELING OF 57-248</scope>
</reference>
<reference key="16">
    <citation type="journal article" date="2005" name="Science">
        <title>Structure of the quaternary complex of interleukin-2 with its alpha, beta, and gammac receptors.</title>
        <authorList>
            <person name="Wang X."/>
            <person name="Rickert M."/>
            <person name="Garcia K.C."/>
        </authorList>
    </citation>
    <scope>X-RAY CRYSTALLOGRAPHY (2.3 ANGSTROMS) OF 56-254 IN COMPLEX WITH IL2; IL2RA AND IL2RB</scope>
    <scope>DISULFIDE BONDS</scope>
    <scope>GLYCOSYLATION AT ASN-71; ASN-84 AND ASN-159</scope>
</reference>
<reference key="17">
    <citation type="journal article" date="2006" name="Proc. Natl. Acad. Sci. U.S.A.">
        <title>Crystal structure of the IL-2 signaling complex: paradigm for a heterotrimeric cytokine receptor.</title>
        <authorList>
            <person name="Stauber D.J."/>
            <person name="Debler E.W."/>
            <person name="Horton P.A."/>
            <person name="Smith K.A."/>
            <person name="Wilson I.A."/>
        </authorList>
    </citation>
    <scope>X-RAY CRYSTALLOGRAPHY (3.0 ANGSTROMS) OF 23-255 IN COMPLEX WITH IL2; IL2RA AND IL2RB</scope>
    <scope>DISULFIDE BONDS</scope>
    <scope>GLYCOSYLATION AT ASN-71; ASN-84 AND ASN-159</scope>
</reference>
<reference key="18">
    <citation type="journal article" date="1994" name="Eur. J. Immunol.">
        <title>Interleukin-2 (IL-2) receptor gamma chain mutations in X-linked severe combined immunodeficiency disease result in the loss of high-affinity IL-2 receptor binding.</title>
        <authorList>
            <person name="Disanto J.P."/>
            <person name="Dautry-Varsat A."/>
            <person name="Certain S."/>
            <person name="Fischer A."/>
            <person name="de Saint Basile G."/>
        </authorList>
    </citation>
    <scope>VARIANTS XSCID PHE-115; CYS-240 AND ILE-241</scope>
</reference>
<reference key="19">
    <citation type="journal article" date="1994" name="Genomics">
        <title>Detection of three nonsense mutations and one missense mutation in the interleukin-2 receptor gamma chain gene in SCIDX1 that differently affect the mRNA processing.</title>
        <authorList>
            <person name="Markiewicz S."/>
            <person name="Subtil A."/>
            <person name="Dautry-Varsat A."/>
            <person name="Fischer A."/>
            <person name="de Saint Basile G."/>
        </authorList>
    </citation>
    <scope>VARIANT XSCID LYS-68</scope>
</reference>
<reference key="20">
    <citation type="journal article" date="1994" name="J. Immunol.">
        <title>Impairment of ligand binding and growth signaling of mutant IL-2 receptor gamma-chains in patients with X-linked severe combined immunodeficiency.</title>
        <authorList>
            <person name="Ishii N."/>
            <person name="Asao H."/>
            <person name="Kimura Y."/>
            <person name="Takeshita T."/>
            <person name="Nakamura M."/>
            <person name="Tsuchiya S."/>
            <person name="Konno T."/>
            <person name="Maeda M."/>
            <person name="Uchiyama T."/>
            <person name="Sugamura K."/>
        </authorList>
    </citation>
    <scope>VARIANT XSCID HIS-162</scope>
</reference>
<reference key="21">
    <citation type="journal article" date="1994" name="Proc. Natl. Acad. Sci. U.S.A.">
        <title>Defective human interleukin 2 receptor gamma chain in an atypical X chromosome-linked severe combined immunodeficiency with peripheral T cells.</title>
        <authorList>
            <person name="Disanto J.P."/>
            <person name="Rieux-Laucat F."/>
            <person name="Dautry-Varsat A."/>
            <person name="Fischer A."/>
            <person name="de Saint Basile G."/>
        </authorList>
    </citation>
    <scope>VARIANT XSCID ASN-39</scope>
</reference>
<reference key="22">
    <citation type="journal article" date="1995" name="Am. J. Hum. Genet.">
        <title>Two mutational hotspots in the interleukin-2 receptor gamma chain gene causing human X-linked severe combined immunodeficiency.</title>
        <authorList>
            <person name="Pepper A.E."/>
            <person name="Buckley R.H."/>
            <person name="Small T.N."/>
            <person name="Puck J.M."/>
        </authorList>
    </citation>
    <scope>VARIANTS XSCID CYS-226 AND HIS-226</scope>
</reference>
<reference key="23">
    <citation type="journal article" date="1995" name="Hum. Genet.">
        <title>Screening for mutations causing X-linked severe combined immunodeficiency in the IL-2R gamma chain gene by single-strand conformation polymorphism analysis.</title>
        <authorList>
            <person name="Clark P.A."/>
            <person name="Lester T."/>
            <person name="Genet S."/>
            <person name="Jones A.M."/>
            <person name="Hendriks R."/>
            <person name="Levinsky R.L."/>
            <person name="Kinnon C."/>
        </authorList>
    </citation>
    <scope>VARIANT XSCID SER-183</scope>
</reference>
<reference key="24">
    <citation type="journal article" date="1995" name="J. Clin. Invest.">
        <title>Female germ line mosaicism as the origin of a unique IL-2 receptor gamma-chain mutation causing X-linked severe combined immunodeficiency.</title>
        <authorList>
            <person name="Puck J.M."/>
            <person name="Pepper A.E."/>
            <person name="Bedard P.-M."/>
            <person name="Laframboise R."/>
        </authorList>
    </citation>
    <scope>VARIANT XSCID GLN-HIS-TRP-237 INS</scope>
</reference>
<reference key="25">
    <citation type="journal article" date="1995" name="J. Clin. Invest.">
        <title>Missense mutation in exon 7 of the common gamma chain gene causes a moderate form of X-linked combined immunodeficiency.</title>
        <authorList>
            <person name="Schmalstieg F.C."/>
            <person name="Leonard W.J."/>
            <person name="Noguchi M."/>
            <person name="Berg M."/>
            <person name="Rudloff H.E."/>
            <person name="Denney R.M."/>
            <person name="Dave S.K."/>
            <person name="Brooks E.G."/>
            <person name="Goldman A.S."/>
        </authorList>
    </citation>
    <scope>VARIANT XCID GLN-293</scope>
</reference>
<reference key="26">
    <citation type="journal article" date="1996" name="N. Engl. J. Med.">
        <title>Atypical X-linked severe combined immunodeficiency due to possible spontaneous reversion of the genetic defect in T cells.</title>
        <authorList>
            <person name="Stephan V."/>
            <person name="Wahn V."/>
            <person name="Le Deist F."/>
            <person name="Dirksen U."/>
            <person name="Broeker B."/>
            <person name="Mueller-Fleckenstein I."/>
            <person name="Horneff G."/>
            <person name="Schroten H."/>
            <person name="Fischer A."/>
            <person name="de Saint Basile G."/>
        </authorList>
    </citation>
    <scope>VARIANT XSCID ARG-115</scope>
</reference>
<reference key="27">
    <citation type="journal article" date="1997" name="Hum. Genet.">
        <title>B-cell-negative severe combined immunodeficiency associated with a common gamma chain mutation.</title>
        <authorList>
            <person name="Jones A.M."/>
            <person name="Clark P.A."/>
            <person name="Katz F."/>
            <person name="Genet S."/>
            <person name="McMahon C."/>
            <person name="Alterman L."/>
            <person name="Cant A."/>
            <person name="Kinnon C."/>
        </authorList>
    </citation>
    <scope>VARIANT XSCID GLN-285</scope>
</reference>
<reference key="28">
    <citation type="journal article" date="1997" name="J. Clin. Immunol.">
        <title>Maternal mosaicism for a novel interleukin-2 receptor gamma-chain mutation causing X-linked severe combined immunodeficiency in a Navajo kindred.</title>
        <authorList>
            <person name="O'Marcaigh A.S."/>
            <person name="Puck J.M."/>
            <person name="Pepper A.E."/>
            <person name="De Santes K."/>
            <person name="Cowan M.J."/>
        </authorList>
    </citation>
    <scope>VARIANT XSCID TRP-224</scope>
</reference>
<reference key="29">
    <citation type="journal article" date="1997" name="J. Clin. Invest.">
        <title>An interleukin-2 receptor gamma chain mutation with normal thymus morphology.</title>
        <authorList>
            <person name="Sharfe N."/>
            <person name="Shahar M."/>
            <person name="Roifman C.M."/>
        </authorList>
    </citation>
    <scope>VARIANT XCID CYS-222</scope>
</reference>